<protein>
    <recommendedName>
        <fullName evidence="1">Cytochrome c-type biogenesis protein CcmE</fullName>
    </recommendedName>
    <alternativeName>
        <fullName evidence="1">Cytochrome c maturation protein E</fullName>
    </alternativeName>
    <alternativeName>
        <fullName evidence="1">Heme chaperone CcmE</fullName>
    </alternativeName>
</protein>
<feature type="chain" id="PRO_1000070866" description="Cytochrome c-type biogenesis protein CcmE">
    <location>
        <begin position="1"/>
        <end position="140"/>
    </location>
</feature>
<feature type="topological domain" description="Cytoplasmic" evidence="1">
    <location>
        <begin position="1"/>
        <end position="7"/>
    </location>
</feature>
<feature type="transmembrane region" description="Helical; Signal-anchor for type II membrane protein" evidence="1">
    <location>
        <begin position="8"/>
        <end position="28"/>
    </location>
</feature>
<feature type="topological domain" description="Periplasmic" evidence="1">
    <location>
        <begin position="29"/>
        <end position="140"/>
    </location>
</feature>
<feature type="binding site" description="covalent" evidence="1">
    <location>
        <position position="120"/>
    </location>
    <ligand>
        <name>heme</name>
        <dbReference type="ChEBI" id="CHEBI:30413"/>
    </ligand>
</feature>
<feature type="binding site" description="axial binding residue" evidence="1">
    <location>
        <position position="124"/>
    </location>
    <ligand>
        <name>heme</name>
        <dbReference type="ChEBI" id="CHEBI:30413"/>
    </ligand>
    <ligandPart>
        <name>Fe</name>
        <dbReference type="ChEBI" id="CHEBI:18248"/>
    </ligandPart>
</feature>
<evidence type="ECO:0000255" key="1">
    <source>
        <dbReference type="HAMAP-Rule" id="MF_01959"/>
    </source>
</evidence>
<sequence>MTKRQNRMVLVALLVIGVSLAGYLGLKAFNENLLYFLSPTDVTKGRAPKDKDFRLGGMIVKDSIKHDGIKVVFDVTDYSNTFRVNYSGILPDLFKEGQGVITTGSLVDGVFMATEVLAKHDENYMPPEVADALEKAKNKQ</sequence>
<comment type="function">
    <text evidence="1">Heme chaperone required for the biogenesis of c-type cytochromes. Transiently binds heme delivered by CcmC and transfers the heme to apo-cytochromes in a process facilitated by CcmF and CcmH.</text>
</comment>
<comment type="subcellular location">
    <subcellularLocation>
        <location evidence="1">Cell inner membrane</location>
        <topology evidence="1">Single-pass type II membrane protein</topology>
        <orientation evidence="1">Periplasmic side</orientation>
    </subcellularLocation>
</comment>
<comment type="similarity">
    <text evidence="1">Belongs to the CcmE/CycJ family.</text>
</comment>
<reference key="1">
    <citation type="journal article" date="2007" name="Curr. Biol.">
        <title>Reduced genome of the thioautotrophic intracellular symbiont in a deep-sea clam, Calyptogena okutanii.</title>
        <authorList>
            <person name="Kuwahara H."/>
            <person name="Yoshida T."/>
            <person name="Takaki Y."/>
            <person name="Shimamura S."/>
            <person name="Nishi S."/>
            <person name="Harada M."/>
            <person name="Matsuyama K."/>
            <person name="Takishita K."/>
            <person name="Kawato M."/>
            <person name="Uematsu K."/>
            <person name="Fujiwara Y."/>
            <person name="Sato T."/>
            <person name="Kato C."/>
            <person name="Kitagawa M."/>
            <person name="Kato I."/>
            <person name="Maruyama T."/>
        </authorList>
    </citation>
    <scope>NUCLEOTIDE SEQUENCE [LARGE SCALE GENOMIC DNA]</scope>
    <source>
        <strain>HA</strain>
    </source>
</reference>
<dbReference type="EMBL" id="AP009247">
    <property type="protein sequence ID" value="BAF61719.1"/>
    <property type="molecule type" value="Genomic_DNA"/>
</dbReference>
<dbReference type="RefSeq" id="WP_011929989.1">
    <property type="nucleotide sequence ID" value="NC_009465.1"/>
</dbReference>
<dbReference type="SMR" id="A5CWG8"/>
<dbReference type="STRING" id="412965.COSY_0606"/>
<dbReference type="KEGG" id="vok:COSY_0606"/>
<dbReference type="eggNOG" id="COG2332">
    <property type="taxonomic scope" value="Bacteria"/>
</dbReference>
<dbReference type="HOGENOM" id="CLU_079503_1_1_6"/>
<dbReference type="OrthoDB" id="9793584at2"/>
<dbReference type="Proteomes" id="UP000000247">
    <property type="component" value="Chromosome"/>
</dbReference>
<dbReference type="GO" id="GO:0005886">
    <property type="term" value="C:plasma membrane"/>
    <property type="evidence" value="ECO:0007669"/>
    <property type="project" value="UniProtKB-SubCell"/>
</dbReference>
<dbReference type="GO" id="GO:0020037">
    <property type="term" value="F:heme binding"/>
    <property type="evidence" value="ECO:0007669"/>
    <property type="project" value="InterPro"/>
</dbReference>
<dbReference type="GO" id="GO:0046872">
    <property type="term" value="F:metal ion binding"/>
    <property type="evidence" value="ECO:0007669"/>
    <property type="project" value="UniProtKB-KW"/>
</dbReference>
<dbReference type="GO" id="GO:0017004">
    <property type="term" value="P:cytochrome complex assembly"/>
    <property type="evidence" value="ECO:0007669"/>
    <property type="project" value="UniProtKB-KW"/>
</dbReference>
<dbReference type="Gene3D" id="2.40.50.140">
    <property type="entry name" value="Nucleic acid-binding proteins"/>
    <property type="match status" value="1"/>
</dbReference>
<dbReference type="HAMAP" id="MF_01959">
    <property type="entry name" value="CcmE"/>
    <property type="match status" value="1"/>
</dbReference>
<dbReference type="InterPro" id="IPR004329">
    <property type="entry name" value="CcmE"/>
</dbReference>
<dbReference type="InterPro" id="IPR036127">
    <property type="entry name" value="CcmE-like_sf"/>
</dbReference>
<dbReference type="InterPro" id="IPR012340">
    <property type="entry name" value="NA-bd_OB-fold"/>
</dbReference>
<dbReference type="NCBIfam" id="NF009727">
    <property type="entry name" value="PRK13254.1-1"/>
    <property type="match status" value="1"/>
</dbReference>
<dbReference type="NCBIfam" id="NF009729">
    <property type="entry name" value="PRK13254.1-3"/>
    <property type="match status" value="1"/>
</dbReference>
<dbReference type="NCBIfam" id="NF009731">
    <property type="entry name" value="PRK13254.1-5"/>
    <property type="match status" value="1"/>
</dbReference>
<dbReference type="PANTHER" id="PTHR34128">
    <property type="entry name" value="CYTOCHROME C-TYPE BIOGENESIS PROTEIN CCME HOMOLOG, MITOCHONDRIAL"/>
    <property type="match status" value="1"/>
</dbReference>
<dbReference type="PANTHER" id="PTHR34128:SF2">
    <property type="entry name" value="CYTOCHROME C-TYPE BIOGENESIS PROTEIN CCME HOMOLOG, MITOCHONDRIAL"/>
    <property type="match status" value="1"/>
</dbReference>
<dbReference type="Pfam" id="PF03100">
    <property type="entry name" value="CcmE"/>
    <property type="match status" value="1"/>
</dbReference>
<dbReference type="SUPFAM" id="SSF82093">
    <property type="entry name" value="Heme chaperone CcmE"/>
    <property type="match status" value="1"/>
</dbReference>
<proteinExistence type="inferred from homology"/>
<organism>
    <name type="scientific">Vesicomyosocius okutanii subsp. Calyptogena okutanii (strain HA)</name>
    <dbReference type="NCBI Taxonomy" id="412965"/>
    <lineage>
        <taxon>Bacteria</taxon>
        <taxon>Pseudomonadati</taxon>
        <taxon>Pseudomonadota</taxon>
        <taxon>Gammaproteobacteria</taxon>
        <taxon>Candidatus Pseudothioglobaceae</taxon>
        <taxon>Candidatus Vesicomyosocius</taxon>
    </lineage>
</organism>
<name>CCME_VESOH</name>
<keyword id="KW-0997">Cell inner membrane</keyword>
<keyword id="KW-1003">Cell membrane</keyword>
<keyword id="KW-0201">Cytochrome c-type biogenesis</keyword>
<keyword id="KW-0349">Heme</keyword>
<keyword id="KW-0408">Iron</keyword>
<keyword id="KW-0472">Membrane</keyword>
<keyword id="KW-0479">Metal-binding</keyword>
<keyword id="KW-1185">Reference proteome</keyword>
<keyword id="KW-0735">Signal-anchor</keyword>
<keyword id="KW-0812">Transmembrane</keyword>
<keyword id="KW-1133">Transmembrane helix</keyword>
<accession>A5CWG8</accession>
<gene>
    <name evidence="1" type="primary">ccmE</name>
    <name evidence="1" type="synonym">cycJ</name>
    <name type="ordered locus">COSY_0606</name>
</gene>